<comment type="function">
    <text evidence="1">Allows the formation of correctly charged Asn-tRNA(Asn) or Gln-tRNA(Gln) through the transamidation of misacylated Asp-tRNA(Asn) or Glu-tRNA(Gln) in organisms which lack either or both of asparaginyl-tRNA or glutaminyl-tRNA synthetases. The reaction takes place in the presence of glutamine and ATP through an activated phospho-Asp-tRNA(Asn) or phospho-Glu-tRNA(Gln).</text>
</comment>
<comment type="catalytic activity">
    <reaction evidence="1">
        <text>L-glutamyl-tRNA(Gln) + L-glutamine + ATP + H2O = L-glutaminyl-tRNA(Gln) + L-glutamate + ADP + phosphate + H(+)</text>
        <dbReference type="Rhea" id="RHEA:17521"/>
        <dbReference type="Rhea" id="RHEA-COMP:9681"/>
        <dbReference type="Rhea" id="RHEA-COMP:9684"/>
        <dbReference type="ChEBI" id="CHEBI:15377"/>
        <dbReference type="ChEBI" id="CHEBI:15378"/>
        <dbReference type="ChEBI" id="CHEBI:29985"/>
        <dbReference type="ChEBI" id="CHEBI:30616"/>
        <dbReference type="ChEBI" id="CHEBI:43474"/>
        <dbReference type="ChEBI" id="CHEBI:58359"/>
        <dbReference type="ChEBI" id="CHEBI:78520"/>
        <dbReference type="ChEBI" id="CHEBI:78521"/>
        <dbReference type="ChEBI" id="CHEBI:456216"/>
    </reaction>
</comment>
<comment type="catalytic activity">
    <reaction evidence="1">
        <text>L-aspartyl-tRNA(Asn) + L-glutamine + ATP + H2O = L-asparaginyl-tRNA(Asn) + L-glutamate + ADP + phosphate + 2 H(+)</text>
        <dbReference type="Rhea" id="RHEA:14513"/>
        <dbReference type="Rhea" id="RHEA-COMP:9674"/>
        <dbReference type="Rhea" id="RHEA-COMP:9677"/>
        <dbReference type="ChEBI" id="CHEBI:15377"/>
        <dbReference type="ChEBI" id="CHEBI:15378"/>
        <dbReference type="ChEBI" id="CHEBI:29985"/>
        <dbReference type="ChEBI" id="CHEBI:30616"/>
        <dbReference type="ChEBI" id="CHEBI:43474"/>
        <dbReference type="ChEBI" id="CHEBI:58359"/>
        <dbReference type="ChEBI" id="CHEBI:78515"/>
        <dbReference type="ChEBI" id="CHEBI:78516"/>
        <dbReference type="ChEBI" id="CHEBI:456216"/>
    </reaction>
</comment>
<comment type="subunit">
    <text evidence="1">Heterotrimer of A, B and C subunits.</text>
</comment>
<comment type="similarity">
    <text evidence="1">Belongs to the GatC family.</text>
</comment>
<proteinExistence type="inferred from homology"/>
<evidence type="ECO:0000255" key="1">
    <source>
        <dbReference type="HAMAP-Rule" id="MF_00122"/>
    </source>
</evidence>
<gene>
    <name evidence="1" type="primary">gatC</name>
    <name type="ordered locus">P9211_02581</name>
</gene>
<keyword id="KW-0067">ATP-binding</keyword>
<keyword id="KW-0436">Ligase</keyword>
<keyword id="KW-0547">Nucleotide-binding</keyword>
<keyword id="KW-0648">Protein biosynthesis</keyword>
<keyword id="KW-1185">Reference proteome</keyword>
<sequence>MTKITSDDVRKVATLARLNLPEDLIDTYTSQLEKILGYVAQLEEVDTEDIPPTSRAVEVTNVLREDIIQETDIREDLINLAPNREGDFFRVPKILSE</sequence>
<accession>A9BDK3</accession>
<name>GATC_PROM4</name>
<reference key="1">
    <citation type="journal article" date="2007" name="PLoS Genet.">
        <title>Patterns and implications of gene gain and loss in the evolution of Prochlorococcus.</title>
        <authorList>
            <person name="Kettler G.C."/>
            <person name="Martiny A.C."/>
            <person name="Huang K."/>
            <person name="Zucker J."/>
            <person name="Coleman M.L."/>
            <person name="Rodrigue S."/>
            <person name="Chen F."/>
            <person name="Lapidus A."/>
            <person name="Ferriera S."/>
            <person name="Johnson J."/>
            <person name="Steglich C."/>
            <person name="Church G.M."/>
            <person name="Richardson P."/>
            <person name="Chisholm S.W."/>
        </authorList>
    </citation>
    <scope>NUCLEOTIDE SEQUENCE [LARGE SCALE GENOMIC DNA]</scope>
    <source>
        <strain>MIT 9211</strain>
    </source>
</reference>
<organism>
    <name type="scientific">Prochlorococcus marinus (strain MIT 9211)</name>
    <dbReference type="NCBI Taxonomy" id="93059"/>
    <lineage>
        <taxon>Bacteria</taxon>
        <taxon>Bacillati</taxon>
        <taxon>Cyanobacteriota</taxon>
        <taxon>Cyanophyceae</taxon>
        <taxon>Synechococcales</taxon>
        <taxon>Prochlorococcaceae</taxon>
        <taxon>Prochlorococcus</taxon>
    </lineage>
</organism>
<protein>
    <recommendedName>
        <fullName evidence="1">Aspartyl/glutamyl-tRNA(Asn/Gln) amidotransferase subunit C</fullName>
        <shortName evidence="1">Asp/Glu-ADT subunit C</shortName>
        <ecNumber evidence="1">6.3.5.-</ecNumber>
    </recommendedName>
</protein>
<feature type="chain" id="PRO_1000095307" description="Aspartyl/glutamyl-tRNA(Asn/Gln) amidotransferase subunit C">
    <location>
        <begin position="1"/>
        <end position="97"/>
    </location>
</feature>
<dbReference type="EC" id="6.3.5.-" evidence="1"/>
<dbReference type="EMBL" id="CP000878">
    <property type="protein sequence ID" value="ABX08189.1"/>
    <property type="molecule type" value="Genomic_DNA"/>
</dbReference>
<dbReference type="RefSeq" id="WP_012194814.1">
    <property type="nucleotide sequence ID" value="NC_009976.1"/>
</dbReference>
<dbReference type="SMR" id="A9BDK3"/>
<dbReference type="STRING" id="93059.P9211_02581"/>
<dbReference type="KEGG" id="pmj:P9211_02581"/>
<dbReference type="eggNOG" id="COG0721">
    <property type="taxonomic scope" value="Bacteria"/>
</dbReference>
<dbReference type="HOGENOM" id="CLU_105899_1_2_3"/>
<dbReference type="OrthoDB" id="9813938at2"/>
<dbReference type="Proteomes" id="UP000000788">
    <property type="component" value="Chromosome"/>
</dbReference>
<dbReference type="GO" id="GO:0050566">
    <property type="term" value="F:asparaginyl-tRNA synthase (glutamine-hydrolyzing) activity"/>
    <property type="evidence" value="ECO:0007669"/>
    <property type="project" value="RHEA"/>
</dbReference>
<dbReference type="GO" id="GO:0005524">
    <property type="term" value="F:ATP binding"/>
    <property type="evidence" value="ECO:0007669"/>
    <property type="project" value="UniProtKB-KW"/>
</dbReference>
<dbReference type="GO" id="GO:0050567">
    <property type="term" value="F:glutaminyl-tRNA synthase (glutamine-hydrolyzing) activity"/>
    <property type="evidence" value="ECO:0007669"/>
    <property type="project" value="UniProtKB-UniRule"/>
</dbReference>
<dbReference type="GO" id="GO:0070681">
    <property type="term" value="P:glutaminyl-tRNAGln biosynthesis via transamidation"/>
    <property type="evidence" value="ECO:0007669"/>
    <property type="project" value="TreeGrafter"/>
</dbReference>
<dbReference type="GO" id="GO:0006450">
    <property type="term" value="P:regulation of translational fidelity"/>
    <property type="evidence" value="ECO:0007669"/>
    <property type="project" value="InterPro"/>
</dbReference>
<dbReference type="GO" id="GO:0006412">
    <property type="term" value="P:translation"/>
    <property type="evidence" value="ECO:0007669"/>
    <property type="project" value="UniProtKB-UniRule"/>
</dbReference>
<dbReference type="Gene3D" id="1.10.20.60">
    <property type="entry name" value="Glu-tRNAGln amidotransferase C subunit, N-terminal domain"/>
    <property type="match status" value="1"/>
</dbReference>
<dbReference type="HAMAP" id="MF_00122">
    <property type="entry name" value="GatC"/>
    <property type="match status" value="1"/>
</dbReference>
<dbReference type="InterPro" id="IPR036113">
    <property type="entry name" value="Asp/Glu-ADT_sf_sub_c"/>
</dbReference>
<dbReference type="InterPro" id="IPR003837">
    <property type="entry name" value="GatC"/>
</dbReference>
<dbReference type="NCBIfam" id="TIGR00135">
    <property type="entry name" value="gatC"/>
    <property type="match status" value="1"/>
</dbReference>
<dbReference type="PANTHER" id="PTHR15004">
    <property type="entry name" value="GLUTAMYL-TRNA(GLN) AMIDOTRANSFERASE SUBUNIT C, MITOCHONDRIAL"/>
    <property type="match status" value="1"/>
</dbReference>
<dbReference type="PANTHER" id="PTHR15004:SF0">
    <property type="entry name" value="GLUTAMYL-TRNA(GLN) AMIDOTRANSFERASE SUBUNIT C, MITOCHONDRIAL"/>
    <property type="match status" value="1"/>
</dbReference>
<dbReference type="Pfam" id="PF02686">
    <property type="entry name" value="GatC"/>
    <property type="match status" value="1"/>
</dbReference>
<dbReference type="SUPFAM" id="SSF141000">
    <property type="entry name" value="Glu-tRNAGln amidotransferase C subunit"/>
    <property type="match status" value="1"/>
</dbReference>